<sequence>MPALHIEDLPEKEKLKMEVEQLRKEVKLQRQQVSKCSEEIKNYIEERSGEDPLVKGIPEDKNPFKEKGSCVIS</sequence>
<proteinExistence type="evidence at protein level"/>
<organism>
    <name type="scientific">Mus musculus</name>
    <name type="common">Mouse</name>
    <dbReference type="NCBI Taxonomy" id="10090"/>
    <lineage>
        <taxon>Eukaryota</taxon>
        <taxon>Metazoa</taxon>
        <taxon>Chordata</taxon>
        <taxon>Craniata</taxon>
        <taxon>Vertebrata</taxon>
        <taxon>Euteleostomi</taxon>
        <taxon>Mammalia</taxon>
        <taxon>Eutheria</taxon>
        <taxon>Euarchontoglires</taxon>
        <taxon>Glires</taxon>
        <taxon>Rodentia</taxon>
        <taxon>Myomorpha</taxon>
        <taxon>Muroidea</taxon>
        <taxon>Muridae</taxon>
        <taxon>Murinae</taxon>
        <taxon>Mus</taxon>
        <taxon>Mus</taxon>
    </lineage>
</organism>
<accession>P61953</accession>
<accession>P50152</accession>
<accession>Q4QRN2</accession>
<reference key="1">
    <citation type="journal article" date="2005" name="Science">
        <title>The transcriptional landscape of the mammalian genome.</title>
        <authorList>
            <person name="Carninci P."/>
            <person name="Kasukawa T."/>
            <person name="Katayama S."/>
            <person name="Gough J."/>
            <person name="Frith M.C."/>
            <person name="Maeda N."/>
            <person name="Oyama R."/>
            <person name="Ravasi T."/>
            <person name="Lenhard B."/>
            <person name="Wells C."/>
            <person name="Kodzius R."/>
            <person name="Shimokawa K."/>
            <person name="Bajic V.B."/>
            <person name="Brenner S.E."/>
            <person name="Batalov S."/>
            <person name="Forrest A.R."/>
            <person name="Zavolan M."/>
            <person name="Davis M.J."/>
            <person name="Wilming L.G."/>
            <person name="Aidinis V."/>
            <person name="Allen J.E."/>
            <person name="Ambesi-Impiombato A."/>
            <person name="Apweiler R."/>
            <person name="Aturaliya R.N."/>
            <person name="Bailey T.L."/>
            <person name="Bansal M."/>
            <person name="Baxter L."/>
            <person name="Beisel K.W."/>
            <person name="Bersano T."/>
            <person name="Bono H."/>
            <person name="Chalk A.M."/>
            <person name="Chiu K.P."/>
            <person name="Choudhary V."/>
            <person name="Christoffels A."/>
            <person name="Clutterbuck D.R."/>
            <person name="Crowe M.L."/>
            <person name="Dalla E."/>
            <person name="Dalrymple B.P."/>
            <person name="de Bono B."/>
            <person name="Della Gatta G."/>
            <person name="di Bernardo D."/>
            <person name="Down T."/>
            <person name="Engstrom P."/>
            <person name="Fagiolini M."/>
            <person name="Faulkner G."/>
            <person name="Fletcher C.F."/>
            <person name="Fukushima T."/>
            <person name="Furuno M."/>
            <person name="Futaki S."/>
            <person name="Gariboldi M."/>
            <person name="Georgii-Hemming P."/>
            <person name="Gingeras T.R."/>
            <person name="Gojobori T."/>
            <person name="Green R.E."/>
            <person name="Gustincich S."/>
            <person name="Harbers M."/>
            <person name="Hayashi Y."/>
            <person name="Hensch T.K."/>
            <person name="Hirokawa N."/>
            <person name="Hill D."/>
            <person name="Huminiecki L."/>
            <person name="Iacono M."/>
            <person name="Ikeo K."/>
            <person name="Iwama A."/>
            <person name="Ishikawa T."/>
            <person name="Jakt M."/>
            <person name="Kanapin A."/>
            <person name="Katoh M."/>
            <person name="Kawasawa Y."/>
            <person name="Kelso J."/>
            <person name="Kitamura H."/>
            <person name="Kitano H."/>
            <person name="Kollias G."/>
            <person name="Krishnan S.P."/>
            <person name="Kruger A."/>
            <person name="Kummerfeld S.K."/>
            <person name="Kurochkin I.V."/>
            <person name="Lareau L.F."/>
            <person name="Lazarevic D."/>
            <person name="Lipovich L."/>
            <person name="Liu J."/>
            <person name="Liuni S."/>
            <person name="McWilliam S."/>
            <person name="Madan Babu M."/>
            <person name="Madera M."/>
            <person name="Marchionni L."/>
            <person name="Matsuda H."/>
            <person name="Matsuzawa S."/>
            <person name="Miki H."/>
            <person name="Mignone F."/>
            <person name="Miyake S."/>
            <person name="Morris K."/>
            <person name="Mottagui-Tabar S."/>
            <person name="Mulder N."/>
            <person name="Nakano N."/>
            <person name="Nakauchi H."/>
            <person name="Ng P."/>
            <person name="Nilsson R."/>
            <person name="Nishiguchi S."/>
            <person name="Nishikawa S."/>
            <person name="Nori F."/>
            <person name="Ohara O."/>
            <person name="Okazaki Y."/>
            <person name="Orlando V."/>
            <person name="Pang K.C."/>
            <person name="Pavan W.J."/>
            <person name="Pavesi G."/>
            <person name="Pesole G."/>
            <person name="Petrovsky N."/>
            <person name="Piazza S."/>
            <person name="Reed J."/>
            <person name="Reid J.F."/>
            <person name="Ring B.Z."/>
            <person name="Ringwald M."/>
            <person name="Rost B."/>
            <person name="Ruan Y."/>
            <person name="Salzberg S.L."/>
            <person name="Sandelin A."/>
            <person name="Schneider C."/>
            <person name="Schoenbach C."/>
            <person name="Sekiguchi K."/>
            <person name="Semple C.A."/>
            <person name="Seno S."/>
            <person name="Sessa L."/>
            <person name="Sheng Y."/>
            <person name="Shibata Y."/>
            <person name="Shimada H."/>
            <person name="Shimada K."/>
            <person name="Silva D."/>
            <person name="Sinclair B."/>
            <person name="Sperling S."/>
            <person name="Stupka E."/>
            <person name="Sugiura K."/>
            <person name="Sultana R."/>
            <person name="Takenaka Y."/>
            <person name="Taki K."/>
            <person name="Tammoja K."/>
            <person name="Tan S.L."/>
            <person name="Tang S."/>
            <person name="Taylor M.S."/>
            <person name="Tegner J."/>
            <person name="Teichmann S.A."/>
            <person name="Ueda H.R."/>
            <person name="van Nimwegen E."/>
            <person name="Verardo R."/>
            <person name="Wei C.L."/>
            <person name="Yagi K."/>
            <person name="Yamanishi H."/>
            <person name="Zabarovsky E."/>
            <person name="Zhu S."/>
            <person name="Zimmer A."/>
            <person name="Hide W."/>
            <person name="Bult C."/>
            <person name="Grimmond S.M."/>
            <person name="Teasdale R.D."/>
            <person name="Liu E.T."/>
            <person name="Brusic V."/>
            <person name="Quackenbush J."/>
            <person name="Wahlestedt C."/>
            <person name="Mattick J.S."/>
            <person name="Hume D.A."/>
            <person name="Kai C."/>
            <person name="Sasaki D."/>
            <person name="Tomaru Y."/>
            <person name="Fukuda S."/>
            <person name="Kanamori-Katayama M."/>
            <person name="Suzuki M."/>
            <person name="Aoki J."/>
            <person name="Arakawa T."/>
            <person name="Iida J."/>
            <person name="Imamura K."/>
            <person name="Itoh M."/>
            <person name="Kato T."/>
            <person name="Kawaji H."/>
            <person name="Kawagashira N."/>
            <person name="Kawashima T."/>
            <person name="Kojima M."/>
            <person name="Kondo S."/>
            <person name="Konno H."/>
            <person name="Nakano K."/>
            <person name="Ninomiya N."/>
            <person name="Nishio T."/>
            <person name="Okada M."/>
            <person name="Plessy C."/>
            <person name="Shibata K."/>
            <person name="Shiraki T."/>
            <person name="Suzuki S."/>
            <person name="Tagami M."/>
            <person name="Waki K."/>
            <person name="Watahiki A."/>
            <person name="Okamura-Oho Y."/>
            <person name="Suzuki H."/>
            <person name="Kawai J."/>
            <person name="Hayashizaki Y."/>
        </authorList>
    </citation>
    <scope>NUCLEOTIDE SEQUENCE [LARGE SCALE MRNA]</scope>
    <source>
        <strain>C57BL/6J</strain>
        <tissue>Kidney</tissue>
        <tissue>Tongue</tissue>
    </source>
</reference>
<reference key="2">
    <citation type="journal article" date="2004" name="Genome Res.">
        <title>The status, quality, and expansion of the NIH full-length cDNA project: the Mammalian Gene Collection (MGC).</title>
        <authorList>
            <consortium name="The MGC Project Team"/>
        </authorList>
    </citation>
    <scope>NUCLEOTIDE SEQUENCE [LARGE SCALE MRNA]</scope>
    <source>
        <strain>C57BL/6J</strain>
        <strain>FVB/N</strain>
    </source>
</reference>
<reference key="3">
    <citation type="submission" date="2009-01" db="UniProtKB">
        <authorList>
            <person name="Lubec G."/>
            <person name="Sunyer B."/>
            <person name="Chen W.-Q."/>
        </authorList>
    </citation>
    <scope>PROTEIN SEQUENCE OF 24-30</scope>
    <scope>IDENTIFICATION BY MASS SPECTROMETRY</scope>
    <source>
        <strain>OF1</strain>
        <tissue>Hippocampus</tissue>
    </source>
</reference>
<evidence type="ECO:0000250" key="1"/>
<evidence type="ECO:0000255" key="2"/>
<evidence type="ECO:0000256" key="3">
    <source>
        <dbReference type="SAM" id="MobiDB-lite"/>
    </source>
</evidence>
<evidence type="ECO:0000305" key="4"/>
<gene>
    <name type="primary">Gng11</name>
    <name type="synonym">Gngt11</name>
</gene>
<keyword id="KW-1003">Cell membrane</keyword>
<keyword id="KW-0903">Direct protein sequencing</keyword>
<keyword id="KW-0449">Lipoprotein</keyword>
<keyword id="KW-0472">Membrane</keyword>
<keyword id="KW-0488">Methylation</keyword>
<keyword id="KW-0636">Prenylation</keyword>
<keyword id="KW-1185">Reference proteome</keyword>
<keyword id="KW-0807">Transducer</keyword>
<protein>
    <recommendedName>
        <fullName>Guanine nucleotide-binding protein G(I)/G(S)/G(O) subunit gamma-11</fullName>
    </recommendedName>
</protein>
<comment type="function">
    <text evidence="1">Guanine nucleotide-binding proteins (G proteins) are involved as a modulator or transducer in various transmembrane signaling systems. The beta and gamma chains are required for the GTPase activity, for replacement of GDP by GTP, and for G protein-effector interaction (By similarity).</text>
</comment>
<comment type="subunit">
    <text evidence="1">G proteins are composed of 3 units, alpha, beta and gamma. Interacts with beta-1 and beta-3, but not with beta-2 (By similarity).</text>
</comment>
<comment type="subcellular location">
    <subcellularLocation>
        <location evidence="4">Cell membrane</location>
        <topology evidence="4">Lipid-anchor</topology>
        <orientation evidence="4">Cytoplasmic side</orientation>
    </subcellularLocation>
</comment>
<comment type="similarity">
    <text evidence="4">Belongs to the G protein gamma family.</text>
</comment>
<name>GBG11_MOUSE</name>
<feature type="chain" id="PRO_0000012661" description="Guanine nucleotide-binding protein G(I)/G(S)/G(O) subunit gamma-11">
    <location>
        <begin position="1"/>
        <end position="70"/>
    </location>
</feature>
<feature type="propeptide" id="PRO_0000012662" description="Removed in mature form" evidence="1">
    <location>
        <begin position="71"/>
        <end position="73"/>
    </location>
</feature>
<feature type="region of interest" description="Disordered" evidence="3">
    <location>
        <begin position="51"/>
        <end position="73"/>
    </location>
</feature>
<feature type="modified residue" description="Cysteine methyl ester" evidence="2">
    <location>
        <position position="70"/>
    </location>
</feature>
<feature type="lipid moiety-binding region" description="S-farnesyl cysteine" evidence="1">
    <location>
        <position position="70"/>
    </location>
</feature>
<dbReference type="EMBL" id="AK002765">
    <property type="protein sequence ID" value="BAB22340.1"/>
    <property type="molecule type" value="mRNA"/>
</dbReference>
<dbReference type="EMBL" id="AK009529">
    <property type="protein sequence ID" value="BAB26342.1"/>
    <property type="molecule type" value="mRNA"/>
</dbReference>
<dbReference type="EMBL" id="BC039062">
    <property type="protein sequence ID" value="AAH39062.1"/>
    <property type="molecule type" value="mRNA"/>
</dbReference>
<dbReference type="EMBL" id="BC040065">
    <property type="protein sequence ID" value="AAH40065.1"/>
    <property type="molecule type" value="mRNA"/>
</dbReference>
<dbReference type="CCDS" id="CCDS39419.1"/>
<dbReference type="RefSeq" id="NP_079607.1">
    <property type="nucleotide sequence ID" value="NM_025331.2"/>
</dbReference>
<dbReference type="SMR" id="P61953"/>
<dbReference type="BioGRID" id="211189">
    <property type="interactions" value="7"/>
</dbReference>
<dbReference type="FunCoup" id="P61953">
    <property type="interactions" value="580"/>
</dbReference>
<dbReference type="STRING" id="10090.ENSMUSP00000031670"/>
<dbReference type="PhosphoSitePlus" id="P61953"/>
<dbReference type="jPOST" id="P61953"/>
<dbReference type="PaxDb" id="10090-ENSMUSP00000031670"/>
<dbReference type="ProteomicsDB" id="273417"/>
<dbReference type="Pumba" id="P61953"/>
<dbReference type="Antibodypedia" id="30078">
    <property type="antibodies" value="94 antibodies from 19 providers"/>
</dbReference>
<dbReference type="DNASU" id="66066"/>
<dbReference type="Ensembl" id="ENSMUST00000031670.10">
    <property type="protein sequence ID" value="ENSMUSP00000031670.9"/>
    <property type="gene ID" value="ENSMUSG00000032766.10"/>
</dbReference>
<dbReference type="GeneID" id="66066"/>
<dbReference type="KEGG" id="mmu:66066"/>
<dbReference type="UCSC" id="uc009avj.2">
    <property type="organism name" value="mouse"/>
</dbReference>
<dbReference type="AGR" id="MGI:1913316"/>
<dbReference type="CTD" id="2791"/>
<dbReference type="MGI" id="MGI:1913316">
    <property type="gene designation" value="Gng11"/>
</dbReference>
<dbReference type="VEuPathDB" id="HostDB:ENSMUSG00000032766"/>
<dbReference type="eggNOG" id="KOG4119">
    <property type="taxonomic scope" value="Eukaryota"/>
</dbReference>
<dbReference type="GeneTree" id="ENSGT01100000263525"/>
<dbReference type="HOGENOM" id="CLU_168377_2_0_1"/>
<dbReference type="InParanoid" id="P61953"/>
<dbReference type="OMA" id="KLERWMT"/>
<dbReference type="OrthoDB" id="9933679at2759"/>
<dbReference type="PhylomeDB" id="P61953"/>
<dbReference type="TreeFam" id="TF319909"/>
<dbReference type="Reactome" id="R-MMU-1296041">
    <property type="pathway name" value="Activation of G protein gated Potassium channels"/>
</dbReference>
<dbReference type="Reactome" id="R-MMU-202040">
    <property type="pathway name" value="G-protein activation"/>
</dbReference>
<dbReference type="Reactome" id="R-MMU-381676">
    <property type="pathway name" value="Glucagon-like Peptide-1 (GLP1) regulates insulin secretion"/>
</dbReference>
<dbReference type="Reactome" id="R-MMU-392170">
    <property type="pathway name" value="ADP signalling through P2Y purinoceptor 12"/>
</dbReference>
<dbReference type="Reactome" id="R-MMU-392451">
    <property type="pathway name" value="G beta:gamma signalling through PI3Kgamma"/>
</dbReference>
<dbReference type="Reactome" id="R-MMU-392851">
    <property type="pathway name" value="Prostacyclin signalling through prostacyclin receptor"/>
</dbReference>
<dbReference type="Reactome" id="R-MMU-400042">
    <property type="pathway name" value="Adrenaline,noradrenaline inhibits insulin secretion"/>
</dbReference>
<dbReference type="Reactome" id="R-MMU-4086398">
    <property type="pathway name" value="Ca2+ pathway"/>
</dbReference>
<dbReference type="Reactome" id="R-MMU-416476">
    <property type="pathway name" value="G alpha (q) signalling events"/>
</dbReference>
<dbReference type="Reactome" id="R-MMU-416482">
    <property type="pathway name" value="G alpha (12/13) signalling events"/>
</dbReference>
<dbReference type="Reactome" id="R-MMU-418217">
    <property type="pathway name" value="G beta:gamma signalling through PLC beta"/>
</dbReference>
<dbReference type="Reactome" id="R-MMU-418555">
    <property type="pathway name" value="G alpha (s) signalling events"/>
</dbReference>
<dbReference type="Reactome" id="R-MMU-418592">
    <property type="pathway name" value="ADP signalling through P2Y purinoceptor 1"/>
</dbReference>
<dbReference type="Reactome" id="R-MMU-418594">
    <property type="pathway name" value="G alpha (i) signalling events"/>
</dbReference>
<dbReference type="Reactome" id="R-MMU-418597">
    <property type="pathway name" value="G alpha (z) signalling events"/>
</dbReference>
<dbReference type="Reactome" id="R-MMU-420092">
    <property type="pathway name" value="Glucagon-type ligand receptors"/>
</dbReference>
<dbReference type="Reactome" id="R-MMU-428930">
    <property type="pathway name" value="Thromboxane signalling through TP receptor"/>
</dbReference>
<dbReference type="Reactome" id="R-MMU-432040">
    <property type="pathway name" value="Vasopressin regulates renal water homeostasis via Aquaporins"/>
</dbReference>
<dbReference type="Reactome" id="R-MMU-456926">
    <property type="pathway name" value="Thrombin signalling through proteinase activated receptors (PARs)"/>
</dbReference>
<dbReference type="Reactome" id="R-MMU-500657">
    <property type="pathway name" value="Presynaptic function of Kainate receptors"/>
</dbReference>
<dbReference type="Reactome" id="R-MMU-6814122">
    <property type="pathway name" value="Cooperation of PDCL (PhLP1) and TRiC/CCT in G-protein beta folding"/>
</dbReference>
<dbReference type="Reactome" id="R-MMU-8964315">
    <property type="pathway name" value="G beta:gamma signalling through BTK"/>
</dbReference>
<dbReference type="Reactome" id="R-MMU-8964616">
    <property type="pathway name" value="G beta:gamma signalling through CDC42"/>
</dbReference>
<dbReference type="Reactome" id="R-MMU-9009391">
    <property type="pathway name" value="Extra-nuclear estrogen signaling"/>
</dbReference>
<dbReference type="Reactome" id="R-MMU-9634597">
    <property type="pathway name" value="GPER1 signaling"/>
</dbReference>
<dbReference type="Reactome" id="R-MMU-9856530">
    <property type="pathway name" value="High laminar flow shear stress activates signaling by PIEZO1 and PECAM1:CDH5:KDR in endothelial cells"/>
</dbReference>
<dbReference type="Reactome" id="R-MMU-997272">
    <property type="pathway name" value="Inhibition of voltage gated Ca2+ channels via Gbeta/gamma subunits"/>
</dbReference>
<dbReference type="BioGRID-ORCS" id="66066">
    <property type="hits" value="1 hit in 74 CRISPR screens"/>
</dbReference>
<dbReference type="ChiTaRS" id="Gng11">
    <property type="organism name" value="mouse"/>
</dbReference>
<dbReference type="PRO" id="PR:P61953"/>
<dbReference type="Proteomes" id="UP000000589">
    <property type="component" value="Chromosome 6"/>
</dbReference>
<dbReference type="RNAct" id="P61953">
    <property type="molecule type" value="protein"/>
</dbReference>
<dbReference type="Bgee" id="ENSMUSG00000032766">
    <property type="expression patterns" value="Expressed in decidua and 240 other cell types or tissues"/>
</dbReference>
<dbReference type="GO" id="GO:0005834">
    <property type="term" value="C:heterotrimeric G-protein complex"/>
    <property type="evidence" value="ECO:0007669"/>
    <property type="project" value="InterPro"/>
</dbReference>
<dbReference type="GO" id="GO:0031681">
    <property type="term" value="F:G-protein beta-subunit binding"/>
    <property type="evidence" value="ECO:0007669"/>
    <property type="project" value="InterPro"/>
</dbReference>
<dbReference type="GO" id="GO:0007186">
    <property type="term" value="P:G protein-coupled receptor signaling pathway"/>
    <property type="evidence" value="ECO:0007669"/>
    <property type="project" value="InterPro"/>
</dbReference>
<dbReference type="CDD" id="cd00068">
    <property type="entry name" value="GGL"/>
    <property type="match status" value="1"/>
</dbReference>
<dbReference type="FunFam" id="4.10.260.10:FF:000001">
    <property type="entry name" value="Guanine nucleotide-binding protein subunit gamma"/>
    <property type="match status" value="1"/>
</dbReference>
<dbReference type="Gene3D" id="4.10.260.10">
    <property type="entry name" value="Transducin (heterotrimeric G protein), gamma chain"/>
    <property type="match status" value="1"/>
</dbReference>
<dbReference type="InterPro" id="IPR015898">
    <property type="entry name" value="G-protein_gamma-like_dom"/>
</dbReference>
<dbReference type="InterPro" id="IPR036284">
    <property type="entry name" value="GGL_sf"/>
</dbReference>
<dbReference type="InterPro" id="IPR001770">
    <property type="entry name" value="Gprotein-gamma"/>
</dbReference>
<dbReference type="PANTHER" id="PTHR13809">
    <property type="entry name" value="GUANINE NUCLEOTIDE-BINDING PROTEIN GAMMA SUBUNIT"/>
    <property type="match status" value="1"/>
</dbReference>
<dbReference type="Pfam" id="PF00631">
    <property type="entry name" value="G-gamma"/>
    <property type="match status" value="1"/>
</dbReference>
<dbReference type="PRINTS" id="PR00321">
    <property type="entry name" value="GPROTEING"/>
</dbReference>
<dbReference type="SMART" id="SM01224">
    <property type="entry name" value="G_gamma"/>
    <property type="match status" value="1"/>
</dbReference>
<dbReference type="SMART" id="SM00224">
    <property type="entry name" value="GGL"/>
    <property type="match status" value="1"/>
</dbReference>
<dbReference type="SUPFAM" id="SSF48670">
    <property type="entry name" value="Transducin (heterotrimeric G protein), gamma chain"/>
    <property type="match status" value="1"/>
</dbReference>
<dbReference type="PROSITE" id="PS50058">
    <property type="entry name" value="G_PROTEIN_GAMMA"/>
    <property type="match status" value="1"/>
</dbReference>